<feature type="chain" id="PRO_1000199409" description="Proline--tRNA ligase">
    <location>
        <begin position="1"/>
        <end position="600"/>
    </location>
</feature>
<evidence type="ECO:0000255" key="1">
    <source>
        <dbReference type="HAMAP-Rule" id="MF_01569"/>
    </source>
</evidence>
<keyword id="KW-0030">Aminoacyl-tRNA synthetase</keyword>
<keyword id="KW-0067">ATP-binding</keyword>
<keyword id="KW-0963">Cytoplasm</keyword>
<keyword id="KW-0436">Ligase</keyword>
<keyword id="KW-0547">Nucleotide-binding</keyword>
<keyword id="KW-0648">Protein biosynthesis</keyword>
<keyword id="KW-1185">Reference proteome</keyword>
<organism>
    <name type="scientific">Prochlorococcus marinus (strain MIT 9211)</name>
    <dbReference type="NCBI Taxonomy" id="93059"/>
    <lineage>
        <taxon>Bacteria</taxon>
        <taxon>Bacillati</taxon>
        <taxon>Cyanobacteriota</taxon>
        <taxon>Cyanophyceae</taxon>
        <taxon>Synechococcales</taxon>
        <taxon>Prochlorococcaceae</taxon>
        <taxon>Prochlorococcus</taxon>
    </lineage>
</organism>
<proteinExistence type="inferred from homology"/>
<gene>
    <name evidence="1" type="primary">proS</name>
    <name type="ordered locus">P9211_05091</name>
</gene>
<name>SYP_PROM4</name>
<sequence>MRVSRLMLVTLRDAPADAEIISHQLLIRGGFIKRITSGIYAYLPLMWRVIQKINCIIREELNAKGCLEALLPQLHPSDLWKKTGRWEGYTAGEGIMFNLKDRQGRELGLGPTHEEIITQIAGESLHSYKQLPVNLYQIQTKFRDEIRPRFGLMRSREFIMKDAYSFHANEEDLKTSYASMDDAYRKIFERCGIKTVAVEADSGAIGGAASQEFMVTADAGEDLILISKDGKYAANQEKAISIPKAAIPLEKNAPILIETKNQNSINELCLNQNFQADQIIKVIVMLAILENGREQPVLISIRGDQELNETKLSNEISKFLNKNLIALKSITEDDLDRQGLINIPFGSIGPDLEDVMLSNASSWNKKFVRFADKTAAELELFVCGANKTEQHRAFSSWSDVGGLPKVVDIRKAKPGDQCFYDNKQFLIEKRGIEVGHIFQLGRKYSSSLEANFTNEKGSSEPFWMGCYGIGVSRIAQAAVEQSHDQSGIIWPLSISPFEVIIVIANIKDEVQNRLGEDIYKQLRHKGIDVLLDDRDERAGVKFKDADLIGIPWRVVVGRDSSSGKVELLKRSDRSVKLIESEIVVKELIAEISRKKSSISY</sequence>
<reference key="1">
    <citation type="journal article" date="2007" name="PLoS Genet.">
        <title>Patterns and implications of gene gain and loss in the evolution of Prochlorococcus.</title>
        <authorList>
            <person name="Kettler G.C."/>
            <person name="Martiny A.C."/>
            <person name="Huang K."/>
            <person name="Zucker J."/>
            <person name="Coleman M.L."/>
            <person name="Rodrigue S."/>
            <person name="Chen F."/>
            <person name="Lapidus A."/>
            <person name="Ferriera S."/>
            <person name="Johnson J."/>
            <person name="Steglich C."/>
            <person name="Church G.M."/>
            <person name="Richardson P."/>
            <person name="Chisholm S.W."/>
        </authorList>
    </citation>
    <scope>NUCLEOTIDE SEQUENCE [LARGE SCALE GENOMIC DNA]</scope>
    <source>
        <strain>MIT 9211</strain>
    </source>
</reference>
<dbReference type="EC" id="6.1.1.15" evidence="1"/>
<dbReference type="EMBL" id="CP000878">
    <property type="protein sequence ID" value="ABX08440.1"/>
    <property type="molecule type" value="Genomic_DNA"/>
</dbReference>
<dbReference type="RefSeq" id="WP_012195063.1">
    <property type="nucleotide sequence ID" value="NC_009976.1"/>
</dbReference>
<dbReference type="SMR" id="A9BED0"/>
<dbReference type="STRING" id="93059.P9211_05091"/>
<dbReference type="KEGG" id="pmj:P9211_05091"/>
<dbReference type="eggNOG" id="COG0442">
    <property type="taxonomic scope" value="Bacteria"/>
</dbReference>
<dbReference type="HOGENOM" id="CLU_016739_0_0_3"/>
<dbReference type="OrthoDB" id="9809052at2"/>
<dbReference type="Proteomes" id="UP000000788">
    <property type="component" value="Chromosome"/>
</dbReference>
<dbReference type="GO" id="GO:0005829">
    <property type="term" value="C:cytosol"/>
    <property type="evidence" value="ECO:0007669"/>
    <property type="project" value="TreeGrafter"/>
</dbReference>
<dbReference type="GO" id="GO:0002161">
    <property type="term" value="F:aminoacyl-tRNA deacylase activity"/>
    <property type="evidence" value="ECO:0007669"/>
    <property type="project" value="InterPro"/>
</dbReference>
<dbReference type="GO" id="GO:0005524">
    <property type="term" value="F:ATP binding"/>
    <property type="evidence" value="ECO:0007669"/>
    <property type="project" value="UniProtKB-UniRule"/>
</dbReference>
<dbReference type="GO" id="GO:0004827">
    <property type="term" value="F:proline-tRNA ligase activity"/>
    <property type="evidence" value="ECO:0007669"/>
    <property type="project" value="UniProtKB-UniRule"/>
</dbReference>
<dbReference type="GO" id="GO:0006433">
    <property type="term" value="P:prolyl-tRNA aminoacylation"/>
    <property type="evidence" value="ECO:0007669"/>
    <property type="project" value="UniProtKB-UniRule"/>
</dbReference>
<dbReference type="CDD" id="cd04334">
    <property type="entry name" value="ProRS-INS"/>
    <property type="match status" value="1"/>
</dbReference>
<dbReference type="CDD" id="cd00861">
    <property type="entry name" value="ProRS_anticodon_short"/>
    <property type="match status" value="1"/>
</dbReference>
<dbReference type="CDD" id="cd00779">
    <property type="entry name" value="ProRS_core_prok"/>
    <property type="match status" value="1"/>
</dbReference>
<dbReference type="Gene3D" id="3.40.50.800">
    <property type="entry name" value="Anticodon-binding domain"/>
    <property type="match status" value="1"/>
</dbReference>
<dbReference type="Gene3D" id="3.30.930.10">
    <property type="entry name" value="Bira Bifunctional Protein, Domain 2"/>
    <property type="match status" value="2"/>
</dbReference>
<dbReference type="HAMAP" id="MF_01569">
    <property type="entry name" value="Pro_tRNA_synth_type1"/>
    <property type="match status" value="1"/>
</dbReference>
<dbReference type="InterPro" id="IPR002314">
    <property type="entry name" value="aa-tRNA-synt_IIb"/>
</dbReference>
<dbReference type="InterPro" id="IPR006195">
    <property type="entry name" value="aa-tRNA-synth_II"/>
</dbReference>
<dbReference type="InterPro" id="IPR045864">
    <property type="entry name" value="aa-tRNA-synth_II/BPL/LPL"/>
</dbReference>
<dbReference type="InterPro" id="IPR004154">
    <property type="entry name" value="Anticodon-bd"/>
</dbReference>
<dbReference type="InterPro" id="IPR036621">
    <property type="entry name" value="Anticodon-bd_dom_sf"/>
</dbReference>
<dbReference type="InterPro" id="IPR002316">
    <property type="entry name" value="Pro-tRNA-ligase_IIa"/>
</dbReference>
<dbReference type="InterPro" id="IPR004500">
    <property type="entry name" value="Pro-tRNA-synth_IIa_bac-type"/>
</dbReference>
<dbReference type="InterPro" id="IPR023717">
    <property type="entry name" value="Pro-tRNA-Synthase_IIa_type1"/>
</dbReference>
<dbReference type="InterPro" id="IPR050062">
    <property type="entry name" value="Pro-tRNA_synthetase"/>
</dbReference>
<dbReference type="InterPro" id="IPR044140">
    <property type="entry name" value="ProRS_anticodon_short"/>
</dbReference>
<dbReference type="InterPro" id="IPR033730">
    <property type="entry name" value="ProRS_core_prok"/>
</dbReference>
<dbReference type="InterPro" id="IPR036754">
    <property type="entry name" value="YbaK/aa-tRNA-synt-asso_dom_sf"/>
</dbReference>
<dbReference type="NCBIfam" id="NF006625">
    <property type="entry name" value="PRK09194.1"/>
    <property type="match status" value="1"/>
</dbReference>
<dbReference type="NCBIfam" id="TIGR00409">
    <property type="entry name" value="proS_fam_II"/>
    <property type="match status" value="1"/>
</dbReference>
<dbReference type="PANTHER" id="PTHR42753">
    <property type="entry name" value="MITOCHONDRIAL RIBOSOME PROTEIN L39/PROLYL-TRNA LIGASE FAMILY MEMBER"/>
    <property type="match status" value="1"/>
</dbReference>
<dbReference type="PANTHER" id="PTHR42753:SF2">
    <property type="entry name" value="PROLINE--TRNA LIGASE"/>
    <property type="match status" value="1"/>
</dbReference>
<dbReference type="Pfam" id="PF03129">
    <property type="entry name" value="HGTP_anticodon"/>
    <property type="match status" value="1"/>
</dbReference>
<dbReference type="Pfam" id="PF00587">
    <property type="entry name" value="tRNA-synt_2b"/>
    <property type="match status" value="1"/>
</dbReference>
<dbReference type="PRINTS" id="PR01046">
    <property type="entry name" value="TRNASYNTHPRO"/>
</dbReference>
<dbReference type="SUPFAM" id="SSF52954">
    <property type="entry name" value="Class II aaRS ABD-related"/>
    <property type="match status" value="1"/>
</dbReference>
<dbReference type="SUPFAM" id="SSF55681">
    <property type="entry name" value="Class II aaRS and biotin synthetases"/>
    <property type="match status" value="1"/>
</dbReference>
<dbReference type="SUPFAM" id="SSF55826">
    <property type="entry name" value="YbaK/ProRS associated domain"/>
    <property type="match status" value="1"/>
</dbReference>
<dbReference type="PROSITE" id="PS50862">
    <property type="entry name" value="AA_TRNA_LIGASE_II"/>
    <property type="match status" value="1"/>
</dbReference>
<protein>
    <recommendedName>
        <fullName evidence="1">Proline--tRNA ligase</fullName>
        <ecNumber evidence="1">6.1.1.15</ecNumber>
    </recommendedName>
    <alternativeName>
        <fullName evidence="1">Prolyl-tRNA synthetase</fullName>
        <shortName evidence="1">ProRS</shortName>
    </alternativeName>
</protein>
<comment type="function">
    <text evidence="1">Catalyzes the attachment of proline to tRNA(Pro) in a two-step reaction: proline is first activated by ATP to form Pro-AMP and then transferred to the acceptor end of tRNA(Pro). As ProRS can inadvertently accommodate and process non-cognate amino acids such as alanine and cysteine, to avoid such errors it has two additional distinct editing activities against alanine. One activity is designated as 'pretransfer' editing and involves the tRNA(Pro)-independent hydrolysis of activated Ala-AMP. The other activity is designated 'posttransfer' editing and involves deacylation of mischarged Ala-tRNA(Pro). The misacylated Cys-tRNA(Pro) is not edited by ProRS.</text>
</comment>
<comment type="catalytic activity">
    <reaction evidence="1">
        <text>tRNA(Pro) + L-proline + ATP = L-prolyl-tRNA(Pro) + AMP + diphosphate</text>
        <dbReference type="Rhea" id="RHEA:14305"/>
        <dbReference type="Rhea" id="RHEA-COMP:9700"/>
        <dbReference type="Rhea" id="RHEA-COMP:9702"/>
        <dbReference type="ChEBI" id="CHEBI:30616"/>
        <dbReference type="ChEBI" id="CHEBI:33019"/>
        <dbReference type="ChEBI" id="CHEBI:60039"/>
        <dbReference type="ChEBI" id="CHEBI:78442"/>
        <dbReference type="ChEBI" id="CHEBI:78532"/>
        <dbReference type="ChEBI" id="CHEBI:456215"/>
        <dbReference type="EC" id="6.1.1.15"/>
    </reaction>
</comment>
<comment type="subunit">
    <text evidence="1">Homodimer.</text>
</comment>
<comment type="subcellular location">
    <subcellularLocation>
        <location evidence="1">Cytoplasm</location>
    </subcellularLocation>
</comment>
<comment type="domain">
    <text evidence="1">Consists of three domains: the N-terminal catalytic domain, the editing domain and the C-terminal anticodon-binding domain.</text>
</comment>
<comment type="similarity">
    <text evidence="1">Belongs to the class-II aminoacyl-tRNA synthetase family. ProS type 1 subfamily.</text>
</comment>
<accession>A9BED0</accession>